<accession>C0HJW7</accession>
<comment type="function">
    <text evidence="2">Liberates mannose from p-nitrophenyl-alpha-D-mannoside.</text>
</comment>
<comment type="catalytic activity">
    <reaction evidence="2">
        <text>Hydrolysis of terminal, non-reducing alpha-D-mannose residues in alpha-D-mannosides.</text>
        <dbReference type="EC" id="3.2.1.24"/>
    </reaction>
</comment>
<comment type="cofactor">
    <cofactor evidence="2">
        <name>Zn(2+)</name>
        <dbReference type="ChEBI" id="CHEBI:29105"/>
    </cofactor>
    <text evidence="5">Binds 1 zinc ion per subunit.</text>
</comment>
<comment type="activity regulation">
    <text evidence="2">Inhibited by swainsonine but not by 1-desoxymannojirimycin.</text>
</comment>
<comment type="biophysicochemical properties">
    <kinetics>
        <KM evidence="2">1.48 mM for p-nitrophenyl-alpha-D-mannopyranoside</KM>
    </kinetics>
    <phDependence>
        <text evidence="2">Optimum pH is 5.</text>
    </phDependence>
    <temperatureDependence>
        <text evidence="2">Optimum temperature is 65 degrees Celsius. Activity decreases sharply above 70 degrees Celsius.</text>
    </temperatureDependence>
</comment>
<comment type="subunit">
    <text evidence="2">Dimer.</text>
</comment>
<comment type="similarity">
    <text evidence="3">Belongs to the glycosyl hydrolase 38 family.</text>
</comment>
<proteinExistence type="evidence at protein level"/>
<name>MANA_LABPU</name>
<keyword id="KW-0903">Direct protein sequencing</keyword>
<keyword id="KW-0325">Glycoprotein</keyword>
<keyword id="KW-0326">Glycosidase</keyword>
<keyword id="KW-0378">Hydrolase</keyword>
<keyword id="KW-0479">Metal-binding</keyword>
<keyword id="KW-0862">Zinc</keyword>
<protein>
    <recommendedName>
        <fullName evidence="3">Alpha-mannosidase</fullName>
        <ecNumber evidence="2">3.2.1.24</ecNumber>
    </recommendedName>
</protein>
<feature type="chain" id="PRO_0000435002" description="Alpha-mannosidase">
    <location>
        <begin position="1"/>
        <end position="290"/>
    </location>
</feature>
<feature type="active site" description="Nucleophile" evidence="1">
    <location>
        <position position="17"/>
    </location>
</feature>
<feature type="glycosylation site" description="N-linked (GlcNAc...) asparagine" evidence="2">
    <location>
        <position position="64"/>
    </location>
</feature>
<feature type="unsure residue" description="L or I" evidence="2">
    <location>
        <position position="1"/>
    </location>
</feature>
<feature type="unsure residue" description="Q or K" evidence="2">
    <location>
        <position position="6"/>
    </location>
</feature>
<feature type="unsure residue" description="L or I" evidence="2">
    <location>
        <position position="7"/>
    </location>
</feature>
<feature type="unsure residue" description="I or L" evidence="2">
    <location>
        <position position="10"/>
    </location>
</feature>
<feature type="unsure residue" description="Q or K" evidence="2">
    <location>
        <position position="15"/>
    </location>
</feature>
<feature type="unsure residue" description="I or L" evidence="2">
    <location>
        <position position="16"/>
    </location>
</feature>
<feature type="unsure residue" description="Q or K" evidence="2">
    <location>
        <position position="25"/>
    </location>
</feature>
<feature type="unsure residue" description="L or I" evidence="2">
    <location>
        <position position="35"/>
    </location>
</feature>
<feature type="unsure residue" description="Q or K" evidence="2">
    <location>
        <position position="38"/>
    </location>
</feature>
<feature type="unsure residue" description="L or I" evidence="2">
    <location>
        <position position="43"/>
    </location>
</feature>
<feature type="unsure residue" description="Q or K" evidence="2">
    <location>
        <position position="49"/>
    </location>
</feature>
<feature type="unsure residue" description="L or I" evidence="2">
    <location>
        <position position="60"/>
    </location>
</feature>
<feature type="unsure residue" description="Q or K" evidence="2">
    <location>
        <position position="62"/>
    </location>
</feature>
<feature type="unsure residue" description="I or L" evidence="2">
    <location>
        <position position="65"/>
    </location>
</feature>
<feature type="unsure residue" description="L or I" evidence="2">
    <location>
        <position position="71"/>
    </location>
</feature>
<feature type="unsure residue" description="I or L" evidence="2">
    <location>
        <position position="77"/>
    </location>
</feature>
<feature type="unsure residue" description="K or Q" evidence="2">
    <location>
        <position position="82"/>
    </location>
</feature>
<feature type="unsure residue" description="L or I" evidence="2">
    <location>
        <position position="91"/>
    </location>
</feature>
<feature type="unsure residue" description="K or Q" evidence="2">
    <location>
        <position position="92"/>
    </location>
</feature>
<feature type="unsure residue" description="L or I" evidence="2">
    <location>
        <position position="112"/>
    </location>
</feature>
<feature type="unsure residue" description="L or I" evidence="2">
    <location>
        <position position="116"/>
    </location>
</feature>
<feature type="unsure residue" description="I or L" evidence="2">
    <location>
        <position position="118"/>
    </location>
</feature>
<feature type="unsure residue" description="Q or K" evidence="2">
    <location>
        <position position="120"/>
    </location>
</feature>
<feature type="unsure residue" description="K or Q" evidence="2">
    <location>
        <position position="130"/>
    </location>
</feature>
<feature type="unsure residue" description="L or I" evidence="2">
    <location>
        <position position="131"/>
    </location>
</feature>
<feature type="unsure residue" description="I or L" evidence="2">
    <location>
        <position position="133"/>
    </location>
</feature>
<feature type="unsure residue" description="Q or K" evidence="2">
    <location>
        <position position="136"/>
    </location>
</feature>
<feature type="unsure residue" description="L or I" evidence="2">
    <location>
        <position position="141"/>
    </location>
</feature>
<feature type="unsure residue" description="L or I" evidence="2">
    <location>
        <position position="146"/>
    </location>
</feature>
<feature type="unsure residue" description="Q or K" evidence="2">
    <location>
        <position position="150"/>
    </location>
</feature>
<feature type="unsure residue" description="L or I" evidence="2">
    <location>
        <position position="155"/>
    </location>
</feature>
<feature type="unsure residue" description="I or L" evidence="2">
    <location>
        <position position="157"/>
    </location>
</feature>
<feature type="unsure residue" description="Q or K" evidence="2">
    <location>
        <position position="160"/>
    </location>
</feature>
<feature type="unsure residue" description="L or I" evidence="2">
    <location>
        <position position="161"/>
    </location>
</feature>
<feature type="unsure residue" description="L or I" evidence="2">
    <location>
        <position position="162"/>
    </location>
</feature>
<feature type="unsure residue" description="Q or K" evidence="2">
    <location>
        <position position="164"/>
    </location>
</feature>
<feature type="unsure residue" description="Q or K" evidence="2">
    <location>
        <position position="165"/>
    </location>
</feature>
<feature type="unsure residue" description="K or Q" evidence="2">
    <location>
        <position position="166"/>
    </location>
</feature>
<feature type="unsure residue" description="L or I" evidence="2">
    <location>
        <position position="172"/>
    </location>
</feature>
<feature type="unsure residue" description="L or I" evidence="2">
    <location>
        <position position="180"/>
    </location>
</feature>
<feature type="unsure residue" description="K or Q" evidence="2">
    <location>
        <position position="183"/>
    </location>
</feature>
<feature type="unsure residue" description="Q or K" evidence="2">
    <location>
        <position position="189"/>
    </location>
</feature>
<feature type="unsure residue" description="L or I" evidence="2">
    <location>
        <position position="195"/>
    </location>
</feature>
<feature type="unsure residue" description="K or Q" evidence="2">
    <location>
        <position position="207"/>
    </location>
</feature>
<feature type="unsure residue" description="L or I" evidence="2">
    <location>
        <position position="208"/>
    </location>
</feature>
<feature type="unsure residue" description="L or I" evidence="2">
    <location>
        <position position="211"/>
    </location>
</feature>
<feature type="unsure residue" description="L or I" evidence="2">
    <location>
        <position position="216"/>
    </location>
</feature>
<feature type="unsure residue" description="Q or K" evidence="2">
    <location>
        <position position="221"/>
    </location>
</feature>
<feature type="unsure residue" description="Q or K" evidence="2">
    <location>
        <position position="222"/>
    </location>
</feature>
<feature type="unsure residue" description="I or L" evidence="2">
    <location>
        <position position="223"/>
    </location>
</feature>
<feature type="unsure residue" description="I or L" evidence="2">
    <location>
        <position position="227"/>
    </location>
</feature>
<feature type="unsure residue" description="Q or K" evidence="2">
    <location>
        <position position="229"/>
    </location>
</feature>
<feature type="unsure residue" description="I or L" evidence="2">
    <location>
        <position position="230"/>
    </location>
</feature>
<feature type="unsure residue" description="L or I" evidence="2">
    <location>
        <position position="235"/>
    </location>
</feature>
<feature type="unsure residue" description="L or I" evidence="2">
    <location>
        <position position="240"/>
    </location>
</feature>
<feature type="unsure residue" description="L or I" evidence="2">
    <location>
        <position position="245"/>
    </location>
</feature>
<feature type="unsure residue" description="Q or K" evidence="2">
    <location>
        <position position="246"/>
    </location>
</feature>
<feature type="unsure residue" description="Q or K" evidence="2">
    <location>
        <position position="249"/>
    </location>
</feature>
<feature type="unsure residue" description="I or L" evidence="2">
    <location>
        <position position="250"/>
    </location>
</feature>
<feature type="unsure residue" description="L or I" evidence="2">
    <location>
        <position position="252"/>
    </location>
</feature>
<feature type="unsure residue" description="I or L" evidence="2">
    <location>
        <position position="256"/>
    </location>
</feature>
<feature type="unsure residue" description="L or I" evidence="2">
    <location>
        <position position="259"/>
    </location>
</feature>
<feature type="unsure residue" description="K or Q" evidence="2">
    <location>
        <position position="264"/>
    </location>
</feature>
<feature type="unsure residue" description="Q or K" evidence="2">
    <location>
        <position position="271"/>
    </location>
</feature>
<feature type="unsure residue" description="I or L" evidence="2">
    <location>
        <position position="273"/>
    </location>
</feature>
<feature type="unsure residue" description="L or I" evidence="2">
    <location>
        <position position="277"/>
    </location>
</feature>
<feature type="unsure residue" description="L or I" evidence="2">
    <location>
        <position position="278"/>
    </location>
</feature>
<feature type="unsure residue" description="L or I" evidence="2">
    <location>
        <position position="279"/>
    </location>
</feature>
<feature type="unsure residue" description="Q or K" evidence="2">
    <location>
        <position position="284"/>
    </location>
</feature>
<feature type="unsure residue" description="Q or K" evidence="2">
    <location>
        <position position="287"/>
    </location>
</feature>
<feature type="non-consecutive residues" evidence="3">
    <location>
        <begin position="14"/>
        <end position="15"/>
    </location>
</feature>
<feature type="non-consecutive residues" evidence="3">
    <location>
        <begin position="27"/>
        <end position="28"/>
    </location>
</feature>
<feature type="non-consecutive residues" evidence="3">
    <location>
        <begin position="67"/>
        <end position="68"/>
    </location>
</feature>
<feature type="non-consecutive residues" evidence="3">
    <location>
        <begin position="102"/>
        <end position="103"/>
    </location>
</feature>
<feature type="non-consecutive residues" evidence="3">
    <location>
        <begin position="130"/>
        <end position="131"/>
    </location>
</feature>
<feature type="non-consecutive residues" evidence="3">
    <location>
        <begin position="148"/>
        <end position="149"/>
    </location>
</feature>
<feature type="non-consecutive residues" evidence="3">
    <location>
        <begin position="166"/>
        <end position="167"/>
    </location>
</feature>
<feature type="non-consecutive residues" evidence="3">
    <location>
        <begin position="183"/>
        <end position="184"/>
    </location>
</feature>
<feature type="non-consecutive residues" evidence="3">
    <location>
        <begin position="188"/>
        <end position="189"/>
    </location>
</feature>
<feature type="non-consecutive residues" evidence="3">
    <location>
        <begin position="202"/>
        <end position="203"/>
    </location>
</feature>
<feature type="non-consecutive residues" evidence="3">
    <location>
        <begin position="232"/>
        <end position="233"/>
    </location>
</feature>
<feature type="non-consecutive residues" evidence="3">
    <location>
        <begin position="252"/>
        <end position="253"/>
    </location>
</feature>
<sequence>LVSSGQLEFIDGGVQIDPFGHSAVQAYFEVNDNSLPVQDNVELFDYNVQERVNDFVAAALSQANITRVNALYSTPSIYTDAKYATNEYWPLKTDDFFPYADRFNSGPNTDSLADALAIAQHHDAVTGTEKLAIGYQEAEELVSSSLACVQDSDGLEIESQLLPQQKVSVPPLGFSTYTVLTAKYDETGQASGAYLFRPDGTWHGNAKLTVLDGPVLDEVHQQINPWIYQITRSVLVDRPLGGSSLQDGQIELYYRIDPLGEGAKWRRSFGQEIYSPLLLAFAEQDDQDEW</sequence>
<dbReference type="EC" id="3.2.1.24" evidence="2"/>
<dbReference type="iPTMnet" id="C0HJW7"/>
<dbReference type="GO" id="GO:0004559">
    <property type="term" value="F:alpha-mannosidase activity"/>
    <property type="evidence" value="ECO:0007669"/>
    <property type="project" value="UniProtKB-EC"/>
</dbReference>
<dbReference type="GO" id="GO:0030246">
    <property type="term" value="F:carbohydrate binding"/>
    <property type="evidence" value="ECO:0007669"/>
    <property type="project" value="InterPro"/>
</dbReference>
<dbReference type="GO" id="GO:0046872">
    <property type="term" value="F:metal ion binding"/>
    <property type="evidence" value="ECO:0007669"/>
    <property type="project" value="UniProtKB-KW"/>
</dbReference>
<dbReference type="GO" id="GO:0006013">
    <property type="term" value="P:mannose metabolic process"/>
    <property type="evidence" value="ECO:0007669"/>
    <property type="project" value="InterPro"/>
</dbReference>
<dbReference type="Gene3D" id="1.20.1270.50">
    <property type="entry name" value="Glycoside hydrolase family 38, central domain"/>
    <property type="match status" value="2"/>
</dbReference>
<dbReference type="Gene3D" id="2.70.98.30">
    <property type="entry name" value="Golgi alpha-mannosidase II, domain 4"/>
    <property type="match status" value="1"/>
</dbReference>
<dbReference type="InterPro" id="IPR011013">
    <property type="entry name" value="Gal_mutarotase_sf_dom"/>
</dbReference>
<dbReference type="InterPro" id="IPR011330">
    <property type="entry name" value="Glyco_hydro/deAcase_b/a-brl"/>
</dbReference>
<dbReference type="InterPro" id="IPR037094">
    <property type="entry name" value="Glyco_hydro_38_cen_sf"/>
</dbReference>
<dbReference type="InterPro" id="IPR028995">
    <property type="entry name" value="Glyco_hydro_57/38_cen_sf"/>
</dbReference>
<dbReference type="InterPro" id="IPR050843">
    <property type="entry name" value="Glycosyl_Hydrlase_38"/>
</dbReference>
<dbReference type="PANTHER" id="PTHR11607">
    <property type="entry name" value="ALPHA-MANNOSIDASE"/>
    <property type="match status" value="1"/>
</dbReference>
<dbReference type="PANTHER" id="PTHR11607:SF3">
    <property type="entry name" value="LYSOSOMAL ALPHA-MANNOSIDASE"/>
    <property type="match status" value="1"/>
</dbReference>
<dbReference type="SUPFAM" id="SSF88688">
    <property type="entry name" value="Families 57/38 glycoside transferase middle domain"/>
    <property type="match status" value="1"/>
</dbReference>
<dbReference type="SUPFAM" id="SSF74650">
    <property type="entry name" value="Galactose mutarotase-like"/>
    <property type="match status" value="1"/>
</dbReference>
<dbReference type="SUPFAM" id="SSF88713">
    <property type="entry name" value="Glycoside hydrolase/deacetylase"/>
    <property type="match status" value="1"/>
</dbReference>
<reference evidence="4" key="1">
    <citation type="journal article" date="2013" name="Protein Expr. Purif.">
        <title>Characterization of alpha-mannosidase from Dolichos lablab seeds: partial amino acid sequencing and N-glycan analysis.</title>
        <authorList>
            <person name="Gnanesh Kumar B.S."/>
            <person name="Pohlentz G."/>
            <person name="Mormann M."/>
            <person name="Siva Kumar N."/>
        </authorList>
    </citation>
    <scope>PROTEIN SEQUENCE</scope>
    <scope>FUNCTION</scope>
    <scope>CATALYTIC ACTIVITY</scope>
    <scope>COFACTOR</scope>
    <scope>ACTIVITY REGULATION</scope>
    <scope>SUBUNIT</scope>
    <scope>GLYCOSYLATION AT ASN-64</scope>
    <scope>IDENTIFICATION BY MASS SPECTROMETRY</scope>
    <source>
        <tissue evidence="3">Seed</tissue>
    </source>
</reference>
<evidence type="ECO:0000250" key="1">
    <source>
        <dbReference type="UniProtKB" id="C0HJB3"/>
    </source>
</evidence>
<evidence type="ECO:0000269" key="2">
    <source>
    </source>
</evidence>
<evidence type="ECO:0000303" key="3">
    <source>
    </source>
</evidence>
<evidence type="ECO:0000305" key="4"/>
<evidence type="ECO:0000305" key="5">
    <source>
    </source>
</evidence>
<organism evidence="3">
    <name type="scientific">Lablab purpureus</name>
    <name type="common">Hyacinth bean</name>
    <name type="synonym">Dolichos lablab</name>
    <dbReference type="NCBI Taxonomy" id="35936"/>
    <lineage>
        <taxon>Eukaryota</taxon>
        <taxon>Viridiplantae</taxon>
        <taxon>Streptophyta</taxon>
        <taxon>Embryophyta</taxon>
        <taxon>Tracheophyta</taxon>
        <taxon>Spermatophyta</taxon>
        <taxon>Magnoliopsida</taxon>
        <taxon>eudicotyledons</taxon>
        <taxon>Gunneridae</taxon>
        <taxon>Pentapetalae</taxon>
        <taxon>rosids</taxon>
        <taxon>fabids</taxon>
        <taxon>Fabales</taxon>
        <taxon>Fabaceae</taxon>
        <taxon>Papilionoideae</taxon>
        <taxon>50 kb inversion clade</taxon>
        <taxon>NPAAA clade</taxon>
        <taxon>indigoferoid/millettioid clade</taxon>
        <taxon>Phaseoleae</taxon>
        <taxon>Lablab</taxon>
    </lineage>
</organism>